<sequence>MTLSILVAHDLQRVIGFENQLPWHLPNDLKHVKKLSTGHTLVMGRKTFESIGKPLPNRRNVVLTSDTSFNVVGVDVIHSIEDIYQLPGHVFIFGGQILFEEMIDKVDDMYITVIEGKFRGDTFFPPYTFEDWEVASSVEGKLDEKNTIPHTFLHLIRKK</sequence>
<protein>
    <recommendedName>
        <fullName>Dihydrofolate reductase</fullName>
        <shortName>DHFR</shortName>
        <ecNumber>1.5.1.3</ecNumber>
    </recommendedName>
</protein>
<keyword id="KW-0521">NADP</keyword>
<keyword id="KW-0554">One-carbon metabolism</keyword>
<keyword id="KW-0560">Oxidoreductase</keyword>
<dbReference type="EC" id="1.5.1.3"/>
<dbReference type="EMBL" id="BX571857">
    <property type="protein sequence ID" value="CAG43145.1"/>
    <property type="molecule type" value="Genomic_DNA"/>
</dbReference>
<dbReference type="RefSeq" id="WP_000175752.1">
    <property type="nucleotide sequence ID" value="NC_002953.3"/>
</dbReference>
<dbReference type="BMRB" id="Q6G9D5"/>
<dbReference type="SMR" id="Q6G9D5"/>
<dbReference type="KEGG" id="sas:SAS1369"/>
<dbReference type="HOGENOM" id="CLU_043966_5_1_9"/>
<dbReference type="UniPathway" id="UPA00077">
    <property type="reaction ID" value="UER00158"/>
</dbReference>
<dbReference type="GO" id="GO:0005829">
    <property type="term" value="C:cytosol"/>
    <property type="evidence" value="ECO:0007669"/>
    <property type="project" value="TreeGrafter"/>
</dbReference>
<dbReference type="GO" id="GO:0004146">
    <property type="term" value="F:dihydrofolate reductase activity"/>
    <property type="evidence" value="ECO:0007669"/>
    <property type="project" value="UniProtKB-EC"/>
</dbReference>
<dbReference type="GO" id="GO:0050661">
    <property type="term" value="F:NADP binding"/>
    <property type="evidence" value="ECO:0007669"/>
    <property type="project" value="InterPro"/>
</dbReference>
<dbReference type="GO" id="GO:0046452">
    <property type="term" value="P:dihydrofolate metabolic process"/>
    <property type="evidence" value="ECO:0007669"/>
    <property type="project" value="TreeGrafter"/>
</dbReference>
<dbReference type="GO" id="GO:0046655">
    <property type="term" value="P:folic acid metabolic process"/>
    <property type="evidence" value="ECO:0007669"/>
    <property type="project" value="TreeGrafter"/>
</dbReference>
<dbReference type="GO" id="GO:0006730">
    <property type="term" value="P:one-carbon metabolic process"/>
    <property type="evidence" value="ECO:0007669"/>
    <property type="project" value="UniProtKB-KW"/>
</dbReference>
<dbReference type="GO" id="GO:0046654">
    <property type="term" value="P:tetrahydrofolate biosynthetic process"/>
    <property type="evidence" value="ECO:0007669"/>
    <property type="project" value="UniProtKB-UniPathway"/>
</dbReference>
<dbReference type="CDD" id="cd00209">
    <property type="entry name" value="DHFR"/>
    <property type="match status" value="1"/>
</dbReference>
<dbReference type="FunFam" id="3.40.430.10:FF:000001">
    <property type="entry name" value="Dihydrofolate reductase"/>
    <property type="match status" value="1"/>
</dbReference>
<dbReference type="Gene3D" id="3.40.430.10">
    <property type="entry name" value="Dihydrofolate Reductase, subunit A"/>
    <property type="match status" value="1"/>
</dbReference>
<dbReference type="InterPro" id="IPR012259">
    <property type="entry name" value="DHFR"/>
</dbReference>
<dbReference type="InterPro" id="IPR024072">
    <property type="entry name" value="DHFR-like_dom_sf"/>
</dbReference>
<dbReference type="InterPro" id="IPR017925">
    <property type="entry name" value="DHFR_CS"/>
</dbReference>
<dbReference type="InterPro" id="IPR001796">
    <property type="entry name" value="DHFR_dom"/>
</dbReference>
<dbReference type="PANTHER" id="PTHR48069">
    <property type="entry name" value="DIHYDROFOLATE REDUCTASE"/>
    <property type="match status" value="1"/>
</dbReference>
<dbReference type="PANTHER" id="PTHR48069:SF3">
    <property type="entry name" value="DIHYDROFOLATE REDUCTASE"/>
    <property type="match status" value="1"/>
</dbReference>
<dbReference type="Pfam" id="PF00186">
    <property type="entry name" value="DHFR_1"/>
    <property type="match status" value="1"/>
</dbReference>
<dbReference type="PIRSF" id="PIRSF000194">
    <property type="entry name" value="DHFR"/>
    <property type="match status" value="1"/>
</dbReference>
<dbReference type="PRINTS" id="PR00070">
    <property type="entry name" value="DHFR"/>
</dbReference>
<dbReference type="SUPFAM" id="SSF53597">
    <property type="entry name" value="Dihydrofolate reductase-like"/>
    <property type="match status" value="1"/>
</dbReference>
<dbReference type="PROSITE" id="PS00075">
    <property type="entry name" value="DHFR_1"/>
    <property type="match status" value="1"/>
</dbReference>
<dbReference type="PROSITE" id="PS51330">
    <property type="entry name" value="DHFR_2"/>
    <property type="match status" value="1"/>
</dbReference>
<proteinExistence type="inferred from homology"/>
<comment type="function">
    <text evidence="1">Key enzyme in folate metabolism. Catalyzes an essential reaction for de novo glycine and purine synthesis, and for DNA precursor synthesis (By similarity).</text>
</comment>
<comment type="catalytic activity">
    <reaction evidence="2">
        <text>(6S)-5,6,7,8-tetrahydrofolate + NADP(+) = 7,8-dihydrofolate + NADPH + H(+)</text>
        <dbReference type="Rhea" id="RHEA:15009"/>
        <dbReference type="ChEBI" id="CHEBI:15378"/>
        <dbReference type="ChEBI" id="CHEBI:57451"/>
        <dbReference type="ChEBI" id="CHEBI:57453"/>
        <dbReference type="ChEBI" id="CHEBI:57783"/>
        <dbReference type="ChEBI" id="CHEBI:58349"/>
        <dbReference type="EC" id="1.5.1.3"/>
    </reaction>
</comment>
<comment type="pathway">
    <text>Cofactor biosynthesis; tetrahydrofolate biosynthesis; 5,6,7,8-tetrahydrofolate from 7,8-dihydrofolate: step 1/1.</text>
</comment>
<comment type="similarity">
    <text evidence="3">Belongs to the dihydrofolate reductase family.</text>
</comment>
<evidence type="ECO:0000250" key="1"/>
<evidence type="ECO:0000255" key="2">
    <source>
        <dbReference type="PROSITE-ProRule" id="PRU00660"/>
    </source>
</evidence>
<evidence type="ECO:0000305" key="3"/>
<reference key="1">
    <citation type="journal article" date="2004" name="Proc. Natl. Acad. Sci. U.S.A.">
        <title>Complete genomes of two clinical Staphylococcus aureus strains: evidence for the rapid evolution of virulence and drug resistance.</title>
        <authorList>
            <person name="Holden M.T.G."/>
            <person name="Feil E.J."/>
            <person name="Lindsay J.A."/>
            <person name="Peacock S.J."/>
            <person name="Day N.P.J."/>
            <person name="Enright M.C."/>
            <person name="Foster T.J."/>
            <person name="Moore C.E."/>
            <person name="Hurst L."/>
            <person name="Atkin R."/>
            <person name="Barron A."/>
            <person name="Bason N."/>
            <person name="Bentley S.D."/>
            <person name="Chillingworth C."/>
            <person name="Chillingworth T."/>
            <person name="Churcher C."/>
            <person name="Clark L."/>
            <person name="Corton C."/>
            <person name="Cronin A."/>
            <person name="Doggett J."/>
            <person name="Dowd L."/>
            <person name="Feltwell T."/>
            <person name="Hance Z."/>
            <person name="Harris B."/>
            <person name="Hauser H."/>
            <person name="Holroyd S."/>
            <person name="Jagels K."/>
            <person name="James K.D."/>
            <person name="Lennard N."/>
            <person name="Line A."/>
            <person name="Mayes R."/>
            <person name="Moule S."/>
            <person name="Mungall K."/>
            <person name="Ormond D."/>
            <person name="Quail M.A."/>
            <person name="Rabbinowitsch E."/>
            <person name="Rutherford K.M."/>
            <person name="Sanders M."/>
            <person name="Sharp S."/>
            <person name="Simmonds M."/>
            <person name="Stevens K."/>
            <person name="Whitehead S."/>
            <person name="Barrell B.G."/>
            <person name="Spratt B.G."/>
            <person name="Parkhill J."/>
        </authorList>
    </citation>
    <scope>NUCLEOTIDE SEQUENCE [LARGE SCALE GENOMIC DNA]</scope>
    <source>
        <strain>MSSA476</strain>
    </source>
</reference>
<accession>Q6G9D5</accession>
<gene>
    <name type="primary">folA</name>
    <name type="ordered locus">SAS1369</name>
</gene>
<feature type="initiator methionine" description="Removed" evidence="1">
    <location>
        <position position="1"/>
    </location>
</feature>
<feature type="chain" id="PRO_0000186410" description="Dihydrofolate reductase">
    <location>
        <begin position="2"/>
        <end position="159"/>
    </location>
</feature>
<feature type="domain" description="DHFR" evidence="2">
    <location>
        <begin position="2"/>
        <end position="157"/>
    </location>
</feature>
<feature type="binding site" evidence="1">
    <location>
        <begin position="6"/>
        <end position="8"/>
    </location>
    <ligand>
        <name>substrate</name>
    </ligand>
</feature>
<feature type="binding site" evidence="1">
    <location>
        <begin position="7"/>
        <end position="8"/>
    </location>
    <ligand>
        <name>NADP(+)</name>
        <dbReference type="ChEBI" id="CHEBI:58349"/>
    </ligand>
</feature>
<feature type="binding site" evidence="1">
    <location>
        <begin position="15"/>
        <end position="20"/>
    </location>
    <ligand>
        <name>NADP(+)</name>
        <dbReference type="ChEBI" id="CHEBI:58349"/>
    </ligand>
</feature>
<feature type="binding site" evidence="1">
    <location>
        <position position="28"/>
    </location>
    <ligand>
        <name>substrate</name>
    </ligand>
</feature>
<feature type="binding site" evidence="1">
    <location>
        <begin position="44"/>
        <end position="47"/>
    </location>
    <ligand>
        <name>NADP(+)</name>
        <dbReference type="ChEBI" id="CHEBI:58349"/>
    </ligand>
</feature>
<feature type="binding site" evidence="1">
    <location>
        <position position="58"/>
    </location>
    <ligand>
        <name>substrate</name>
    </ligand>
</feature>
<feature type="binding site" evidence="1">
    <location>
        <begin position="63"/>
        <end position="66"/>
    </location>
    <ligand>
        <name>NADP(+)</name>
        <dbReference type="ChEBI" id="CHEBI:58349"/>
    </ligand>
</feature>
<feature type="binding site" evidence="1">
    <location>
        <begin position="93"/>
        <end position="98"/>
    </location>
    <ligand>
        <name>NADP(+)</name>
        <dbReference type="ChEBI" id="CHEBI:58349"/>
    </ligand>
</feature>
<feature type="binding site" evidence="1">
    <location>
        <position position="112"/>
    </location>
    <ligand>
        <name>substrate</name>
    </ligand>
</feature>
<organism>
    <name type="scientific">Staphylococcus aureus (strain MSSA476)</name>
    <dbReference type="NCBI Taxonomy" id="282459"/>
    <lineage>
        <taxon>Bacteria</taxon>
        <taxon>Bacillati</taxon>
        <taxon>Bacillota</taxon>
        <taxon>Bacilli</taxon>
        <taxon>Bacillales</taxon>
        <taxon>Staphylococcaceae</taxon>
        <taxon>Staphylococcus</taxon>
    </lineage>
</organism>
<name>DYR_STAAS</name>